<sequence>MVASSSSATASLLDQLFALTPLADSSAWIKTITVLVLLPLLAVVLNVASQLLLATPKNHPPVVFHFVPVIGSAIYYGIDPYKFFFECREKYGDVFTFVLLGRKITVALGPKGSNLVFNAKHQQVTAEDAYTHLTTPVFGKEVVYDVPNAVFMEQKKFVKVGLSIENFRVYVPQIVDEVREYIKSDARFSALKTRKTITVDIFQAMSELIILTASRTLQGKEVRQGLDKSFAQLYHDLDSGFTPINFVIPNLPLPSNFKRDRAQKKMSQFYQDIVAKRRAAGASTSADDASGENDMIAALIEQKYKNGRALSGVEIAHMMIALLMAGQHTSSATSSWAFLRLASRPEIIEELYEEQLNVYSDGHGGLRELDYETQKTSVPLLDAVVKETLRLHPPLHSIMRYVKSDLAVPPTLSSPTSTKSEPDAHYVIPKGHYIMAAPGVSQVDPQIWKSSDQFDPHRWLDATTAAAMQDSGEDKQDFGFGMISTGANSPYLPFGAGRHRCIGEQFAYLQIGVILATFVRIFKWHLDSKFPDPDYQSMVVLPSKNGCAIVLTPRAESLHLD</sequence>
<dbReference type="EC" id="1.14.14.154"/>
<dbReference type="EMBL" id="Z48164">
    <property type="protein sequence ID" value="CAA88176.1"/>
    <property type="molecule type" value="Genomic_DNA"/>
</dbReference>
<dbReference type="EMBL" id="CM003149">
    <property type="protein sequence ID" value="KIS68081.1"/>
    <property type="molecule type" value="Genomic_DNA"/>
</dbReference>
<dbReference type="PIR" id="S52319">
    <property type="entry name" value="S52319"/>
</dbReference>
<dbReference type="RefSeq" id="XP_011390148.1">
    <property type="nucleotide sequence ID" value="XM_011391846.1"/>
</dbReference>
<dbReference type="SMR" id="P49602"/>
<dbReference type="FunCoup" id="P49602">
    <property type="interactions" value="145"/>
</dbReference>
<dbReference type="STRING" id="237631.P49602"/>
<dbReference type="ChEMBL" id="CHEMBL2242732"/>
<dbReference type="EnsemblFungi" id="KIS68081">
    <property type="protein sequence ID" value="KIS68081"/>
    <property type="gene ID" value="UMAG_03662"/>
</dbReference>
<dbReference type="GeneID" id="23564064"/>
<dbReference type="KEGG" id="uma:UMAG_03662"/>
<dbReference type="VEuPathDB" id="FungiDB:UMAG_03662"/>
<dbReference type="eggNOG" id="KOG0684">
    <property type="taxonomic scope" value="Eukaryota"/>
</dbReference>
<dbReference type="HOGENOM" id="CLU_001570_15_0_1"/>
<dbReference type="InParanoid" id="P49602"/>
<dbReference type="OMA" id="HWFPFVG"/>
<dbReference type="OrthoDB" id="1055148at2759"/>
<dbReference type="UniPathway" id="UPA00770">
    <property type="reaction ID" value="UER00754"/>
</dbReference>
<dbReference type="Proteomes" id="UP000000561">
    <property type="component" value="Chromosome 10"/>
</dbReference>
<dbReference type="GO" id="GO:0032541">
    <property type="term" value="C:cortical endoplasmic reticulum"/>
    <property type="evidence" value="ECO:0007669"/>
    <property type="project" value="EnsemblFungi"/>
</dbReference>
<dbReference type="GO" id="GO:0016020">
    <property type="term" value="C:membrane"/>
    <property type="evidence" value="ECO:0007669"/>
    <property type="project" value="UniProtKB-SubCell"/>
</dbReference>
<dbReference type="GO" id="GO:0097038">
    <property type="term" value="C:perinuclear endoplasmic reticulum"/>
    <property type="evidence" value="ECO:0007669"/>
    <property type="project" value="EnsemblFungi"/>
</dbReference>
<dbReference type="GO" id="GO:0020037">
    <property type="term" value="F:heme binding"/>
    <property type="evidence" value="ECO:0007669"/>
    <property type="project" value="InterPro"/>
</dbReference>
<dbReference type="GO" id="GO:0005506">
    <property type="term" value="F:iron ion binding"/>
    <property type="evidence" value="ECO:0007669"/>
    <property type="project" value="InterPro"/>
</dbReference>
<dbReference type="GO" id="GO:0016491">
    <property type="term" value="F:oxidoreductase activity"/>
    <property type="evidence" value="ECO:0000318"/>
    <property type="project" value="GO_Central"/>
</dbReference>
<dbReference type="GO" id="GO:0008398">
    <property type="term" value="F:sterol 14-demethylase activity"/>
    <property type="evidence" value="ECO:0007669"/>
    <property type="project" value="UniProtKB-EC"/>
</dbReference>
<dbReference type="GO" id="GO:0006696">
    <property type="term" value="P:ergosterol biosynthetic process"/>
    <property type="evidence" value="ECO:0000318"/>
    <property type="project" value="GO_Central"/>
</dbReference>
<dbReference type="CDD" id="cd11042">
    <property type="entry name" value="CYP51-like"/>
    <property type="match status" value="1"/>
</dbReference>
<dbReference type="FunFam" id="1.10.630.10:FF:000033">
    <property type="entry name" value="14-alpha sterol demethylase"/>
    <property type="match status" value="1"/>
</dbReference>
<dbReference type="Gene3D" id="1.10.630.10">
    <property type="entry name" value="Cytochrome P450"/>
    <property type="match status" value="1"/>
</dbReference>
<dbReference type="InterPro" id="IPR050529">
    <property type="entry name" value="CYP450_sterol_14alpha_dmase"/>
</dbReference>
<dbReference type="InterPro" id="IPR001128">
    <property type="entry name" value="Cyt_P450"/>
</dbReference>
<dbReference type="InterPro" id="IPR017972">
    <property type="entry name" value="Cyt_P450_CS"/>
</dbReference>
<dbReference type="InterPro" id="IPR002403">
    <property type="entry name" value="Cyt_P450_E_grp-IV"/>
</dbReference>
<dbReference type="InterPro" id="IPR036396">
    <property type="entry name" value="Cyt_P450_sf"/>
</dbReference>
<dbReference type="PANTHER" id="PTHR24304:SF2">
    <property type="entry name" value="24-HYDROXYCHOLESTEROL 7-ALPHA-HYDROXYLASE"/>
    <property type="match status" value="1"/>
</dbReference>
<dbReference type="PANTHER" id="PTHR24304">
    <property type="entry name" value="CYTOCHROME P450 FAMILY 7"/>
    <property type="match status" value="1"/>
</dbReference>
<dbReference type="Pfam" id="PF00067">
    <property type="entry name" value="p450"/>
    <property type="match status" value="1"/>
</dbReference>
<dbReference type="PRINTS" id="PR00465">
    <property type="entry name" value="EP450IV"/>
</dbReference>
<dbReference type="PRINTS" id="PR00385">
    <property type="entry name" value="P450"/>
</dbReference>
<dbReference type="SUPFAM" id="SSF48264">
    <property type="entry name" value="Cytochrome P450"/>
    <property type="match status" value="1"/>
</dbReference>
<dbReference type="PROSITE" id="PS00086">
    <property type="entry name" value="CYTOCHROME_P450"/>
    <property type="match status" value="1"/>
</dbReference>
<proteinExistence type="inferred from homology"/>
<keyword id="KW-0349">Heme</keyword>
<keyword id="KW-0408">Iron</keyword>
<keyword id="KW-0444">Lipid biosynthesis</keyword>
<keyword id="KW-0443">Lipid metabolism</keyword>
<keyword id="KW-0472">Membrane</keyword>
<keyword id="KW-0479">Metal-binding</keyword>
<keyword id="KW-0503">Monooxygenase</keyword>
<keyword id="KW-0560">Oxidoreductase</keyword>
<keyword id="KW-1185">Reference proteome</keyword>
<keyword id="KW-0752">Steroid biosynthesis</keyword>
<keyword id="KW-0753">Steroid metabolism</keyword>
<keyword id="KW-0756">Sterol biosynthesis</keyword>
<keyword id="KW-1207">Sterol metabolism</keyword>
<evidence type="ECO:0000250" key="1"/>
<evidence type="ECO:0000250" key="2">
    <source>
        <dbReference type="UniProtKB" id="P10613"/>
    </source>
</evidence>
<evidence type="ECO:0000250" key="3">
    <source>
        <dbReference type="UniProtKB" id="P10614"/>
    </source>
</evidence>
<evidence type="ECO:0000250" key="4">
    <source>
        <dbReference type="UniProtKB" id="Q4WNT5"/>
    </source>
</evidence>
<evidence type="ECO:0000305" key="5"/>
<comment type="function">
    <text evidence="2 3 4">Sterol 14alpha-demethylase that plays a critical role in the third module of ergosterol biosynthesis pathway, being ergosterol the major sterol component in fungal membranes that participates in a variety of functions (By similarity). The third module or late pathway involves the ergosterol synthesis itself through consecutive reactions that mainly occur in the endoplasmic reticulum (ER) membrane (By similarity). In filamentous fungi, during the initial step of this module, lanosterol (lanosta-8,24-dien-3beta-ol) can be metabolized to eburicol (By similarity). Sterol 14alpha-demethylase catalyzes the three-step oxidative removal of the 14alpha-methyl group (C-32) of both these sterols in the form of formate, and converts eburicol and lanosterol to 14-demethyleburicol (4,4,24-trimethylergosta-8,14,24(28)-trienol) and 4,4-dimethyl-5alpha-cholesta-8,14,24-trien-3beta-ol, respectively, which are further metabolized by other enzymes in the pathway to ergosterol (By similarity). Can also use substrates not intrinsic to fungi, such as 24,25-dihydrolanosterol (DHL), producing 4,4-dimethyl-8,14-cholestadien-3-beta-ol, but at lower rates than the endogenous substrates (By similarity).</text>
</comment>
<comment type="catalytic activity">
    <reaction evidence="3">
        <text>a 14alpha-methyl steroid + 3 reduced [NADPH--hemoprotein reductase] + 3 O2 = a Delta(14) steroid + formate + 3 oxidized [NADPH--hemoprotein reductase] + 4 H2O + 4 H(+)</text>
        <dbReference type="Rhea" id="RHEA:54028"/>
        <dbReference type="Rhea" id="RHEA-COMP:11964"/>
        <dbReference type="Rhea" id="RHEA-COMP:11965"/>
        <dbReference type="ChEBI" id="CHEBI:15377"/>
        <dbReference type="ChEBI" id="CHEBI:15378"/>
        <dbReference type="ChEBI" id="CHEBI:15379"/>
        <dbReference type="ChEBI" id="CHEBI:15740"/>
        <dbReference type="ChEBI" id="CHEBI:57618"/>
        <dbReference type="ChEBI" id="CHEBI:58210"/>
        <dbReference type="ChEBI" id="CHEBI:138029"/>
        <dbReference type="ChEBI" id="CHEBI:138031"/>
        <dbReference type="EC" id="1.14.14.154"/>
    </reaction>
    <physiologicalReaction direction="left-to-right" evidence="3">
        <dbReference type="Rhea" id="RHEA:54029"/>
    </physiologicalReaction>
</comment>
<comment type="catalytic activity">
    <reaction evidence="3">
        <text>a 14alpha-methyl steroid + reduced [NADPH--hemoprotein reductase] + O2 = a 14alpha-hydroxymethyl steroid + oxidized [NADPH--hemoprotein reductase] + H2O + H(+)</text>
        <dbReference type="Rhea" id="RHEA:68060"/>
        <dbReference type="Rhea" id="RHEA-COMP:11964"/>
        <dbReference type="Rhea" id="RHEA-COMP:11965"/>
        <dbReference type="ChEBI" id="CHEBI:15377"/>
        <dbReference type="ChEBI" id="CHEBI:15378"/>
        <dbReference type="ChEBI" id="CHEBI:15379"/>
        <dbReference type="ChEBI" id="CHEBI:57618"/>
        <dbReference type="ChEBI" id="CHEBI:58210"/>
        <dbReference type="ChEBI" id="CHEBI:138029"/>
        <dbReference type="ChEBI" id="CHEBI:176901"/>
    </reaction>
    <physiologicalReaction direction="left-to-right" evidence="3">
        <dbReference type="Rhea" id="RHEA:68061"/>
    </physiologicalReaction>
</comment>
<comment type="catalytic activity">
    <reaction evidence="3">
        <text>a 14alpha-hydroxymethyl steroid + reduced [NADPH--hemoprotein reductase] + O2 = a 14alpha-formyl steroid + oxidized [NADPH--hemoprotein reductase] + 2 H2O + H(+)</text>
        <dbReference type="Rhea" id="RHEA:68064"/>
        <dbReference type="Rhea" id="RHEA-COMP:11964"/>
        <dbReference type="Rhea" id="RHEA-COMP:11965"/>
        <dbReference type="ChEBI" id="CHEBI:15377"/>
        <dbReference type="ChEBI" id="CHEBI:15378"/>
        <dbReference type="ChEBI" id="CHEBI:15379"/>
        <dbReference type="ChEBI" id="CHEBI:57618"/>
        <dbReference type="ChEBI" id="CHEBI:58210"/>
        <dbReference type="ChEBI" id="CHEBI:176901"/>
        <dbReference type="ChEBI" id="CHEBI:176902"/>
    </reaction>
    <physiologicalReaction direction="left-to-right" evidence="3">
        <dbReference type="Rhea" id="RHEA:68065"/>
    </physiologicalReaction>
</comment>
<comment type="catalytic activity">
    <reaction evidence="3">
        <text>a 14alpha-formyl steroid + reduced [NADPH--hemoprotein reductase] + O2 = a Delta(14) steroid + formate + oxidized [NADPH--hemoprotein reductase] + H2O + 2 H(+)</text>
        <dbReference type="Rhea" id="RHEA:68068"/>
        <dbReference type="Rhea" id="RHEA-COMP:11964"/>
        <dbReference type="Rhea" id="RHEA-COMP:11965"/>
        <dbReference type="ChEBI" id="CHEBI:15377"/>
        <dbReference type="ChEBI" id="CHEBI:15378"/>
        <dbReference type="ChEBI" id="CHEBI:15379"/>
        <dbReference type="ChEBI" id="CHEBI:15740"/>
        <dbReference type="ChEBI" id="CHEBI:57618"/>
        <dbReference type="ChEBI" id="CHEBI:58210"/>
        <dbReference type="ChEBI" id="CHEBI:138031"/>
        <dbReference type="ChEBI" id="CHEBI:176902"/>
    </reaction>
    <physiologicalReaction direction="left-to-right" evidence="3">
        <dbReference type="Rhea" id="RHEA:68069"/>
    </physiologicalReaction>
</comment>
<comment type="catalytic activity">
    <reaction evidence="3">
        <text>lanosterol + 3 reduced [NADPH--hemoprotein reductase] + 3 O2 = 4,4-dimethyl-5alpha-cholesta-8,14,24-trien-3beta-ol + formate + 3 oxidized [NADPH--hemoprotein reductase] + 4 H2O + 4 H(+)</text>
        <dbReference type="Rhea" id="RHEA:25286"/>
        <dbReference type="Rhea" id="RHEA-COMP:11964"/>
        <dbReference type="Rhea" id="RHEA-COMP:11965"/>
        <dbReference type="ChEBI" id="CHEBI:15377"/>
        <dbReference type="ChEBI" id="CHEBI:15378"/>
        <dbReference type="ChEBI" id="CHEBI:15379"/>
        <dbReference type="ChEBI" id="CHEBI:15740"/>
        <dbReference type="ChEBI" id="CHEBI:16521"/>
        <dbReference type="ChEBI" id="CHEBI:17813"/>
        <dbReference type="ChEBI" id="CHEBI:57618"/>
        <dbReference type="ChEBI" id="CHEBI:58210"/>
        <dbReference type="EC" id="1.14.14.154"/>
    </reaction>
    <physiologicalReaction direction="left-to-right" evidence="3">
        <dbReference type="Rhea" id="RHEA:25287"/>
    </physiologicalReaction>
</comment>
<comment type="catalytic activity">
    <reaction evidence="3">
        <text>lanosterol + reduced [NADPH--hemoprotein reductase] + O2 = 32-hydroxylanosterol + oxidized [NADPH--hemoprotein reductase] + H2O + H(+)</text>
        <dbReference type="Rhea" id="RHEA:75103"/>
        <dbReference type="Rhea" id="RHEA-COMP:11964"/>
        <dbReference type="Rhea" id="RHEA-COMP:11965"/>
        <dbReference type="ChEBI" id="CHEBI:15377"/>
        <dbReference type="ChEBI" id="CHEBI:15378"/>
        <dbReference type="ChEBI" id="CHEBI:15379"/>
        <dbReference type="ChEBI" id="CHEBI:16521"/>
        <dbReference type="ChEBI" id="CHEBI:57618"/>
        <dbReference type="ChEBI" id="CHEBI:58210"/>
        <dbReference type="ChEBI" id="CHEBI:166806"/>
    </reaction>
    <physiologicalReaction direction="left-to-right" evidence="3">
        <dbReference type="Rhea" id="RHEA:75104"/>
    </physiologicalReaction>
</comment>
<comment type="catalytic activity">
    <reaction evidence="3">
        <text>32-hydroxylanosterol + reduced [NADPH--hemoprotein reductase] + O2 = 32-oxolanosterol + oxidized [NADPH--hemoprotein reductase] + 2 H2O + H(+)</text>
        <dbReference type="Rhea" id="RHEA:75107"/>
        <dbReference type="Rhea" id="RHEA-COMP:11964"/>
        <dbReference type="Rhea" id="RHEA-COMP:11965"/>
        <dbReference type="ChEBI" id="CHEBI:15377"/>
        <dbReference type="ChEBI" id="CHEBI:15378"/>
        <dbReference type="ChEBI" id="CHEBI:15379"/>
        <dbReference type="ChEBI" id="CHEBI:57618"/>
        <dbReference type="ChEBI" id="CHEBI:58210"/>
        <dbReference type="ChEBI" id="CHEBI:166681"/>
        <dbReference type="ChEBI" id="CHEBI:166806"/>
    </reaction>
    <physiologicalReaction direction="left-to-right" evidence="3">
        <dbReference type="Rhea" id="RHEA:75108"/>
    </physiologicalReaction>
</comment>
<comment type="catalytic activity">
    <reaction evidence="3">
        <text>32-oxolanosterol + reduced [NADPH--hemoprotein reductase] + O2 = 4,4-dimethyl-5alpha-cholesta-8,14,24-trien-3beta-ol + formate + oxidized [NADPH--hemoprotein reductase] + H2O + 2 H(+)</text>
        <dbReference type="Rhea" id="RHEA:75111"/>
        <dbReference type="Rhea" id="RHEA-COMP:11964"/>
        <dbReference type="Rhea" id="RHEA-COMP:11965"/>
        <dbReference type="ChEBI" id="CHEBI:15377"/>
        <dbReference type="ChEBI" id="CHEBI:15378"/>
        <dbReference type="ChEBI" id="CHEBI:15379"/>
        <dbReference type="ChEBI" id="CHEBI:15740"/>
        <dbReference type="ChEBI" id="CHEBI:17813"/>
        <dbReference type="ChEBI" id="CHEBI:57618"/>
        <dbReference type="ChEBI" id="CHEBI:58210"/>
        <dbReference type="ChEBI" id="CHEBI:166681"/>
    </reaction>
    <physiologicalReaction direction="left-to-right" evidence="3">
        <dbReference type="Rhea" id="RHEA:75112"/>
    </physiologicalReaction>
</comment>
<comment type="catalytic activity">
    <reaction evidence="2">
        <text>eburicol + 3 reduced [NADPH--hemoprotein reductase] + 3 O2 = 14-demethyleburicol + formate + 3 oxidized [NADPH--hemoprotein reductase] + 4 H2O + 4 H(+)</text>
        <dbReference type="Rhea" id="RHEA:75439"/>
        <dbReference type="Rhea" id="RHEA-COMP:11964"/>
        <dbReference type="Rhea" id="RHEA-COMP:11965"/>
        <dbReference type="ChEBI" id="CHEBI:15377"/>
        <dbReference type="ChEBI" id="CHEBI:15378"/>
        <dbReference type="ChEBI" id="CHEBI:15379"/>
        <dbReference type="ChEBI" id="CHEBI:15740"/>
        <dbReference type="ChEBI" id="CHEBI:57618"/>
        <dbReference type="ChEBI" id="CHEBI:58210"/>
        <dbReference type="ChEBI" id="CHEBI:70315"/>
        <dbReference type="ChEBI" id="CHEBI:194330"/>
    </reaction>
    <physiologicalReaction direction="left-to-right" evidence="2">
        <dbReference type="Rhea" id="RHEA:75440"/>
    </physiologicalReaction>
</comment>
<comment type="catalytic activity">
    <reaction evidence="3">
        <text>eburicol + reduced [NADPH--hemoprotein reductase] + O2 = 32-hydroxyeburicol + oxidized [NADPH--hemoprotein reductase] + H2O + H(+)</text>
        <dbReference type="Rhea" id="RHEA:75427"/>
        <dbReference type="Rhea" id="RHEA-COMP:11964"/>
        <dbReference type="Rhea" id="RHEA-COMP:11965"/>
        <dbReference type="ChEBI" id="CHEBI:15377"/>
        <dbReference type="ChEBI" id="CHEBI:15378"/>
        <dbReference type="ChEBI" id="CHEBI:15379"/>
        <dbReference type="ChEBI" id="CHEBI:57618"/>
        <dbReference type="ChEBI" id="CHEBI:58210"/>
        <dbReference type="ChEBI" id="CHEBI:70315"/>
        <dbReference type="ChEBI" id="CHEBI:194328"/>
    </reaction>
    <physiologicalReaction direction="left-to-right" evidence="3">
        <dbReference type="Rhea" id="RHEA:75428"/>
    </physiologicalReaction>
</comment>
<comment type="catalytic activity">
    <reaction evidence="3">
        <text>32-hydroxyeburicol + reduced [NADPH--hemoprotein reductase] + O2 = 32-oxoeburicol + oxidized [NADPH--hemoprotein reductase] + 2 H2O + H(+)</text>
        <dbReference type="Rhea" id="RHEA:75431"/>
        <dbReference type="Rhea" id="RHEA-COMP:11964"/>
        <dbReference type="Rhea" id="RHEA-COMP:11965"/>
        <dbReference type="ChEBI" id="CHEBI:15377"/>
        <dbReference type="ChEBI" id="CHEBI:15378"/>
        <dbReference type="ChEBI" id="CHEBI:15379"/>
        <dbReference type="ChEBI" id="CHEBI:57618"/>
        <dbReference type="ChEBI" id="CHEBI:58210"/>
        <dbReference type="ChEBI" id="CHEBI:194328"/>
        <dbReference type="ChEBI" id="CHEBI:194329"/>
    </reaction>
    <physiologicalReaction direction="left-to-right" evidence="3">
        <dbReference type="Rhea" id="RHEA:75432"/>
    </physiologicalReaction>
</comment>
<comment type="catalytic activity">
    <reaction evidence="3">
        <text>32-oxoeburicol + reduced [NADPH--hemoprotein reductase] + O2 = 14-demethyleburicol + formate + oxidized [NADPH--hemoprotein reductase] + H2O + 2 H(+)</text>
        <dbReference type="Rhea" id="RHEA:75435"/>
        <dbReference type="Rhea" id="RHEA-COMP:11964"/>
        <dbReference type="Rhea" id="RHEA-COMP:11965"/>
        <dbReference type="ChEBI" id="CHEBI:15377"/>
        <dbReference type="ChEBI" id="CHEBI:15378"/>
        <dbReference type="ChEBI" id="CHEBI:15379"/>
        <dbReference type="ChEBI" id="CHEBI:15740"/>
        <dbReference type="ChEBI" id="CHEBI:57618"/>
        <dbReference type="ChEBI" id="CHEBI:58210"/>
        <dbReference type="ChEBI" id="CHEBI:194329"/>
        <dbReference type="ChEBI" id="CHEBI:194330"/>
    </reaction>
    <physiologicalReaction direction="left-to-right" evidence="3">
        <dbReference type="Rhea" id="RHEA:75436"/>
    </physiologicalReaction>
</comment>
<comment type="cofactor">
    <cofactor evidence="1">
        <name>heme</name>
        <dbReference type="ChEBI" id="CHEBI:30413"/>
    </cofactor>
</comment>
<comment type="pathway">
    <text>Steroid biosynthesis; zymosterol biosynthesis; zymosterol from lanosterol: step 1/6.</text>
</comment>
<comment type="subcellular location">
    <subcellularLocation>
        <location evidence="5">Membrane</location>
    </subcellularLocation>
</comment>
<comment type="similarity">
    <text evidence="5">Belongs to the cytochrome P450 family.</text>
</comment>
<organism>
    <name type="scientific">Mycosarcoma maydis</name>
    <name type="common">Corn smut fungus</name>
    <name type="synonym">Ustilago maydis</name>
    <dbReference type="NCBI Taxonomy" id="5270"/>
    <lineage>
        <taxon>Eukaryota</taxon>
        <taxon>Fungi</taxon>
        <taxon>Dikarya</taxon>
        <taxon>Basidiomycota</taxon>
        <taxon>Ustilaginomycotina</taxon>
        <taxon>Ustilaginomycetes</taxon>
        <taxon>Ustilaginales</taxon>
        <taxon>Ustilaginaceae</taxon>
        <taxon>Mycosarcoma</taxon>
    </lineage>
</organism>
<gene>
    <name type="primary">ERG11</name>
    <name type="synonym">CYP51</name>
    <name type="ORF">UMAG_03662</name>
</gene>
<reference key="1">
    <citation type="journal article" date="1996" name="FEMS Microbiol. Lett.">
        <title>Isolation of an Ustilago maydis ERG11 gene and its expression in a mutant deficient in sterol 14 alpha-demethylase activity.</title>
        <authorList>
            <person name="Hargreaves J.A."/>
            <person name="Keon J.P.R."/>
        </authorList>
    </citation>
    <scope>NUCLEOTIDE SEQUENCE [GENOMIC DNA]</scope>
    <source>
        <strain>IMI 103761</strain>
    </source>
</reference>
<reference key="2">
    <citation type="journal article" date="2006" name="Nature">
        <title>Insights from the genome of the biotrophic fungal plant pathogen Ustilago maydis.</title>
        <authorList>
            <person name="Kaemper J."/>
            <person name="Kahmann R."/>
            <person name="Boelker M."/>
            <person name="Ma L.-J."/>
            <person name="Brefort T."/>
            <person name="Saville B.J."/>
            <person name="Banuett F."/>
            <person name="Kronstad J.W."/>
            <person name="Gold S.E."/>
            <person name="Mueller O."/>
            <person name="Perlin M.H."/>
            <person name="Woesten H.A.B."/>
            <person name="de Vries R."/>
            <person name="Ruiz-Herrera J."/>
            <person name="Reynaga-Pena C.G."/>
            <person name="Snetselaar K."/>
            <person name="McCann M."/>
            <person name="Perez-Martin J."/>
            <person name="Feldbruegge M."/>
            <person name="Basse C.W."/>
            <person name="Steinberg G."/>
            <person name="Ibeas J.I."/>
            <person name="Holloman W."/>
            <person name="Guzman P."/>
            <person name="Farman M.L."/>
            <person name="Stajich J.E."/>
            <person name="Sentandreu R."/>
            <person name="Gonzalez-Prieto J.M."/>
            <person name="Kennell J.C."/>
            <person name="Molina L."/>
            <person name="Schirawski J."/>
            <person name="Mendoza-Mendoza A."/>
            <person name="Greilinger D."/>
            <person name="Muench K."/>
            <person name="Roessel N."/>
            <person name="Scherer M."/>
            <person name="Vranes M."/>
            <person name="Ladendorf O."/>
            <person name="Vincon V."/>
            <person name="Fuchs U."/>
            <person name="Sandrock B."/>
            <person name="Meng S."/>
            <person name="Ho E.C.H."/>
            <person name="Cahill M.J."/>
            <person name="Boyce K.J."/>
            <person name="Klose J."/>
            <person name="Klosterman S.J."/>
            <person name="Deelstra H.J."/>
            <person name="Ortiz-Castellanos L."/>
            <person name="Li W."/>
            <person name="Sanchez-Alonso P."/>
            <person name="Schreier P.H."/>
            <person name="Haeuser-Hahn I."/>
            <person name="Vaupel M."/>
            <person name="Koopmann E."/>
            <person name="Friedrich G."/>
            <person name="Voss H."/>
            <person name="Schlueter T."/>
            <person name="Margolis J."/>
            <person name="Platt D."/>
            <person name="Swimmer C."/>
            <person name="Gnirke A."/>
            <person name="Chen F."/>
            <person name="Vysotskaia V."/>
            <person name="Mannhaupt G."/>
            <person name="Gueldener U."/>
            <person name="Muensterkoetter M."/>
            <person name="Haase D."/>
            <person name="Oesterheld M."/>
            <person name="Mewes H.-W."/>
            <person name="Mauceli E.W."/>
            <person name="DeCaprio D."/>
            <person name="Wade C.M."/>
            <person name="Butler J."/>
            <person name="Young S.K."/>
            <person name="Jaffe D.B."/>
            <person name="Calvo S.E."/>
            <person name="Nusbaum C."/>
            <person name="Galagan J.E."/>
            <person name="Birren B.W."/>
        </authorList>
    </citation>
    <scope>NUCLEOTIDE SEQUENCE [LARGE SCALE GENOMIC DNA]</scope>
    <source>
        <strain>DSM 14603 / FGSC 9021 / UM521</strain>
    </source>
</reference>
<reference key="3">
    <citation type="submission" date="2014-09" db="EMBL/GenBank/DDBJ databases">
        <authorList>
            <person name="Gueldener U."/>
            <person name="Muensterkoetter M."/>
            <person name="Walter M.C."/>
            <person name="Mannhaupt G."/>
            <person name="Kahmann R."/>
        </authorList>
    </citation>
    <scope>GENOME REANNOTATION</scope>
    <source>
        <strain>DSM 14603 / FGSC 9021 / UM521</strain>
    </source>
</reference>
<accession>P49602</accession>
<accession>A0A0D1DWZ6</accession>
<accession>Q4P8A1</accession>
<feature type="chain" id="PRO_0000052011" description="Lanosterol 14-alpha demethylase">
    <location>
        <begin position="1"/>
        <end position="561"/>
    </location>
</feature>
<feature type="binding site" description="axial binding residue" evidence="1">
    <location>
        <position position="501"/>
    </location>
    <ligand>
        <name>heme</name>
        <dbReference type="ChEBI" id="CHEBI:30413"/>
    </ligand>
    <ligandPart>
        <name>Fe</name>
        <dbReference type="ChEBI" id="CHEBI:18248"/>
    </ligandPart>
</feature>
<name>CP51_MYCMD</name>
<protein>
    <recommendedName>
        <fullName>Lanosterol 14-alpha demethylase</fullName>
        <ecNumber>1.14.14.154</ecNumber>
    </recommendedName>
    <alternativeName>
        <fullName>CYPLI</fullName>
    </alternativeName>
    <alternativeName>
        <fullName>Cytochrome P450 51</fullName>
    </alternativeName>
    <alternativeName>
        <fullName>Cytochrome P450-14DM</fullName>
    </alternativeName>
    <alternativeName>
        <fullName>Cytochrome P450-LIA1</fullName>
    </alternativeName>
    <alternativeName>
        <fullName>Sterol 14-alpha demethylase</fullName>
    </alternativeName>
</protein>